<accession>Q5VV43</accession>
<accession>A7MD37</accession>
<accession>B2RTU7</accession>
<accession>B4DHA7</accession>
<accession>B4DK75</accession>
<accession>B7ZML3</accession>
<accession>F5H123</accession>
<accession>Q9UJC8</accession>
<accession>Q9Y4G7</accession>
<keyword id="KW-0002">3D-structure</keyword>
<keyword id="KW-0025">Alternative splicing</keyword>
<keyword id="KW-1003">Cell membrane</keyword>
<keyword id="KW-0217">Developmental protein</keyword>
<keyword id="KW-0967">Endosome</keyword>
<keyword id="KW-0325">Glycoprotein</keyword>
<keyword id="KW-0472">Membrane</keyword>
<keyword id="KW-0524">Neurogenesis</keyword>
<keyword id="KW-1267">Proteomics identification</keyword>
<keyword id="KW-1185">Reference proteome</keyword>
<keyword id="KW-0677">Repeat</keyword>
<keyword id="KW-0732">Signal</keyword>
<keyword id="KW-0812">Transmembrane</keyword>
<keyword id="KW-1133">Transmembrane helix</keyword>
<organism>
    <name type="scientific">Homo sapiens</name>
    <name type="common">Human</name>
    <dbReference type="NCBI Taxonomy" id="9606"/>
    <lineage>
        <taxon>Eukaryota</taxon>
        <taxon>Metazoa</taxon>
        <taxon>Chordata</taxon>
        <taxon>Craniata</taxon>
        <taxon>Vertebrata</taxon>
        <taxon>Euteleostomi</taxon>
        <taxon>Mammalia</taxon>
        <taxon>Eutheria</taxon>
        <taxon>Euarchontoglires</taxon>
        <taxon>Primates</taxon>
        <taxon>Haplorrhini</taxon>
        <taxon>Catarrhini</taxon>
        <taxon>Hominidae</taxon>
        <taxon>Homo</taxon>
    </lineage>
</organism>
<evidence type="ECO:0000255" key="1"/>
<evidence type="ECO:0000255" key="2">
    <source>
        <dbReference type="PROSITE-ProRule" id="PRU00151"/>
    </source>
</evidence>
<evidence type="ECO:0000255" key="3">
    <source>
        <dbReference type="PROSITE-ProRule" id="PRU00341"/>
    </source>
</evidence>
<evidence type="ECO:0000256" key="4">
    <source>
        <dbReference type="SAM" id="MobiDB-lite"/>
    </source>
</evidence>
<evidence type="ECO:0000269" key="5">
    <source>
    </source>
</evidence>
<evidence type="ECO:0000269" key="6">
    <source>
    </source>
</evidence>
<evidence type="ECO:0000269" key="7">
    <source>
    </source>
</evidence>
<evidence type="ECO:0000269" key="8">
    <source>
    </source>
</evidence>
<evidence type="ECO:0000269" key="9">
    <source>
    </source>
</evidence>
<evidence type="ECO:0000269" key="10">
    <source>
    </source>
</evidence>
<evidence type="ECO:0000269" key="11">
    <source>
    </source>
</evidence>
<evidence type="ECO:0000269" key="12">
    <source>
    </source>
</evidence>
<evidence type="ECO:0000269" key="13">
    <source>
    </source>
</evidence>
<evidence type="ECO:0000269" key="14">
    <source>
    </source>
</evidence>
<evidence type="ECO:0000269" key="15">
    <source>
    </source>
</evidence>
<evidence type="ECO:0000303" key="16">
    <source>
    </source>
</evidence>
<evidence type="ECO:0000303" key="17">
    <source>
    </source>
</evidence>
<evidence type="ECO:0000305" key="18"/>
<evidence type="ECO:0007829" key="19">
    <source>
        <dbReference type="PDB" id="2E7M"/>
    </source>
</evidence>
<protein>
    <recommendedName>
        <fullName>Dyslexia-associated protein KIAA0319</fullName>
    </recommendedName>
</protein>
<comment type="function">
    <text evidence="13">Involved in neuronal migration during development of the cerebral neocortex. May function in a cell autonomous and a non-cell autonomous manner and play a role in appropriate adhesion between migrating neurons and radial glial fibers. May also regulate growth and differentiation of dendrites.</text>
</comment>
<comment type="subunit">
    <text evidence="11 12">Homodimer. Interacts with AP2M1; required for clathrin-mediated endocytosis.</text>
</comment>
<comment type="subcellular location">
    <subcellularLocation>
        <location evidence="11 12">Cell membrane</location>
        <topology evidence="11">Single-pass type I membrane protein</topology>
    </subcellularLocation>
    <subcellularLocation>
        <location evidence="12">Early endosome membrane</location>
        <topology evidence="11">Single-pass type I membrane protein</topology>
    </subcellularLocation>
    <text evidence="11">Low-abundance isoforms lacking the transmembrane domain have been described; these are secreted.</text>
</comment>
<comment type="alternative products">
    <event type="alternative splicing"/>
    <isoform>
        <id>Q5VV43-1</id>
        <name>1</name>
        <name>A</name>
        <sequence type="displayed"/>
    </isoform>
    <isoform>
        <id>Q5VV43-2</id>
        <name>2</name>
        <sequence type="described" ref="VSP_036235"/>
    </isoform>
    <isoform>
        <id>Q5VV43-3</id>
        <name>3</name>
        <sequence type="described" ref="VSP_036234"/>
    </isoform>
    <isoform>
        <id>Q5VV43-4</id>
        <name>4</name>
        <sequence type="described" ref="VSP_044971"/>
    </isoform>
    <text>Additional isoforms seem to exist.</text>
</comment>
<comment type="tissue specificity">
    <text evidence="5 10">Detected in adult brain cortex and fetal frontal lobe (at protein level). Highly expressed in brain cortex, putamen, amygdala, hippocampus and cerebellum.</text>
</comment>
<comment type="developmental stage">
    <text evidence="9">Expressed in the developing cerebral neocortex and glanglionic eminence in 57 days post-fertilization fetal brain.</text>
</comment>
<comment type="PTM">
    <text evidence="11">N-glycosylated.</text>
</comment>
<comment type="PTM">
    <text evidence="11">O-glycosylated.</text>
</comment>
<comment type="PTM">
    <text evidence="14">Shedding of the extracellular domain and intramembrane cleavage produce several proteolytic products. The intramembrane cleavage releases a soluble cytoplasmic polypeptide that translocates to the nucleolus.</text>
</comment>
<comment type="disease" evidence="8 9">
    <disease id="DI-01511">
        <name>Dyslexia 2</name>
        <acronym>DYX2</acronym>
        <description>A relatively common, complex cognitive disorder characterized by an impairment of reading performance despite adequate motivational, educational and intellectual opportunities. It is a multifactorial trait, with evidence for familial clustering and heritability.</description>
        <dbReference type="MIM" id="600202"/>
    </disease>
    <text>Disease susceptibility may be associated with variants affecting the gene represented in this entry.</text>
</comment>
<comment type="sequence caution" evidence="18">
    <conflict type="erroneous initiation">
        <sequence resource="EMBL-CDS" id="BAA20777"/>
    </conflict>
    <text>Extended N-terminus.</text>
</comment>
<comment type="online information" name="Protein Spotlight">
    <link uri="https://www.proteinspotlight.org/back_issues/125"/>
    <text>The twisted way of things - Issue 125 of January 2011</text>
</comment>
<sequence length="1072" mass="117763">MAPPTGVLSSLLLLVTIAGCARKQCSEGRTYSNAVISPNLETTRIMRVSHTFPVVDCTAACCDLSSCDLAWWFEGRCYLVSCPHKENCEPKKMGPIRSYLTFVLRPVQRPAQLLDYGDMMLNRGSPSGIWGDSPEDIRKDLTFLGKDWGLEEMSEYSDDYRELEKDLLQPSGKQEPRGSAEYTDWGLLPGSEGAFNSSVGDSPAVPAETQQDPELHYLNESASTPAPKLPERSVLLPLPTTPSSGEVLEKEKASQLQEQSSNSSGKEVLMPSHSLPPASLELSSVTVEKSPVLTVTPGSTEHSIPTPPTSAAPSESTPSELPISPTTAPRTVKELTVSAGDNLIITLPDNEVELKAFVAPAPPVETTYNYEWNLISHPTDYQGEIKQGHKQTLNLSQLSVGLYVFKVTVSSENAFGEGFVNVTVKPARRVNLPPVAVVSPQLQELTLPLTSALIDGSQSTDDTEIVSYHWEEINGPFIEEKTSVDSPVLRLSNLDPGNYSFRLTVTDSDGATNSTTAALIVNNAVDYPPVANAGPNHTITLPQNSITLNGNQSSDDHQIVLYEWSLGPGSEGKHVVMQGVQTPYLHLSAMQEGDYTFQLKVTDSSRQQSTAVVTVIVQPENNRPPVAVAGPDKELIFPVESATLDGSSSSDDHGIVFYHWEHVRGPSAVEMENIDKAIATVTGLQVGTYHFRLTVKDQQGLSSTSTLTVAVKKENNSPPRARAGGRHVLVLPNNSITLDGSRSTDDQRIVSYLWIRDGQSPAAGDVIDGSDHSVALQLTNLVEGVYTFHLRVTDSQGASDTDTATVEVQPDPRKSGLVELTLQVGVGQLTEQRKDTLVRQLAVLLNVLDSDIKVQKIRAHSDLSTVIVFYVQSRPPFKVLKAAEVARNLHMRLSKEKADFLLFKVLRVDTAGCLLKCSGHGHCDPLTKRCICSHLWMENLIQRYIWDGESNCEWSIFYVTVLAFTLIVLTGGFTWLCICCCKRQKRTKIRKKTKYTILDNMDEQERMELRPKYGIKHRSTEHNSSLMVSESEFDSDQDTIFSREKMERGNPKVSMNGSIRNGASFSYCSKDR</sequence>
<name>K0319_HUMAN</name>
<proteinExistence type="evidence at protein level"/>
<reference key="1">
    <citation type="journal article" date="1997" name="DNA Res.">
        <title>Prediction of the coding sequences of unidentified human genes. VII. The complete sequences of 100 new cDNA clones from brain which can code for large proteins in vitro.</title>
        <authorList>
            <person name="Nagase T."/>
            <person name="Ishikawa K."/>
            <person name="Nakajima D."/>
            <person name="Ohira M."/>
            <person name="Seki N."/>
            <person name="Miyajima N."/>
            <person name="Tanaka A."/>
            <person name="Kotani H."/>
            <person name="Nomura N."/>
            <person name="Ohara O."/>
        </authorList>
    </citation>
    <scope>NUCLEOTIDE SEQUENCE [LARGE SCALE MRNA] (ISOFORM 1)</scope>
    <scope>VARIANT PRO-142</scope>
    <source>
        <tissue>Brain</tissue>
    </source>
</reference>
<reference key="2">
    <citation type="submission" date="2004-01" db="EMBL/GenBank/DDBJ databases">
        <authorList>
            <person name="Ohara O."/>
            <person name="Nagase T."/>
            <person name="Kikuno R."/>
            <person name="Nomura N."/>
        </authorList>
    </citation>
    <scope>SEQUENCE REVISION</scope>
</reference>
<reference key="3">
    <citation type="journal article" date="2004" name="Nat. Genet.">
        <title>Complete sequencing and characterization of 21,243 full-length human cDNAs.</title>
        <authorList>
            <person name="Ota T."/>
            <person name="Suzuki Y."/>
            <person name="Nishikawa T."/>
            <person name="Otsuki T."/>
            <person name="Sugiyama T."/>
            <person name="Irie R."/>
            <person name="Wakamatsu A."/>
            <person name="Hayashi K."/>
            <person name="Sato H."/>
            <person name="Nagai K."/>
            <person name="Kimura K."/>
            <person name="Makita H."/>
            <person name="Sekine M."/>
            <person name="Obayashi M."/>
            <person name="Nishi T."/>
            <person name="Shibahara T."/>
            <person name="Tanaka T."/>
            <person name="Ishii S."/>
            <person name="Yamamoto J."/>
            <person name="Saito K."/>
            <person name="Kawai Y."/>
            <person name="Isono Y."/>
            <person name="Nakamura Y."/>
            <person name="Nagahari K."/>
            <person name="Murakami K."/>
            <person name="Yasuda T."/>
            <person name="Iwayanagi T."/>
            <person name="Wagatsuma M."/>
            <person name="Shiratori A."/>
            <person name="Sudo H."/>
            <person name="Hosoiri T."/>
            <person name="Kaku Y."/>
            <person name="Kodaira H."/>
            <person name="Kondo H."/>
            <person name="Sugawara M."/>
            <person name="Takahashi M."/>
            <person name="Kanda K."/>
            <person name="Yokoi T."/>
            <person name="Furuya T."/>
            <person name="Kikkawa E."/>
            <person name="Omura Y."/>
            <person name="Abe K."/>
            <person name="Kamihara K."/>
            <person name="Katsuta N."/>
            <person name="Sato K."/>
            <person name="Tanikawa M."/>
            <person name="Yamazaki M."/>
            <person name="Ninomiya K."/>
            <person name="Ishibashi T."/>
            <person name="Yamashita H."/>
            <person name="Murakawa K."/>
            <person name="Fujimori K."/>
            <person name="Tanai H."/>
            <person name="Kimata M."/>
            <person name="Watanabe M."/>
            <person name="Hiraoka S."/>
            <person name="Chiba Y."/>
            <person name="Ishida S."/>
            <person name="Ono Y."/>
            <person name="Takiguchi S."/>
            <person name="Watanabe S."/>
            <person name="Yosida M."/>
            <person name="Hotuta T."/>
            <person name="Kusano J."/>
            <person name="Kanehori K."/>
            <person name="Takahashi-Fujii A."/>
            <person name="Hara H."/>
            <person name="Tanase T.-O."/>
            <person name="Nomura Y."/>
            <person name="Togiya S."/>
            <person name="Komai F."/>
            <person name="Hara R."/>
            <person name="Takeuchi K."/>
            <person name="Arita M."/>
            <person name="Imose N."/>
            <person name="Musashino K."/>
            <person name="Yuuki H."/>
            <person name="Oshima A."/>
            <person name="Sasaki N."/>
            <person name="Aotsuka S."/>
            <person name="Yoshikawa Y."/>
            <person name="Matsunawa H."/>
            <person name="Ichihara T."/>
            <person name="Shiohata N."/>
            <person name="Sano S."/>
            <person name="Moriya S."/>
            <person name="Momiyama H."/>
            <person name="Satoh N."/>
            <person name="Takami S."/>
            <person name="Terashima Y."/>
            <person name="Suzuki O."/>
            <person name="Nakagawa S."/>
            <person name="Senoh A."/>
            <person name="Mizoguchi H."/>
            <person name="Goto Y."/>
            <person name="Shimizu F."/>
            <person name="Wakebe H."/>
            <person name="Hishigaki H."/>
            <person name="Watanabe T."/>
            <person name="Sugiyama A."/>
            <person name="Takemoto M."/>
            <person name="Kawakami B."/>
            <person name="Yamazaki M."/>
            <person name="Watanabe K."/>
            <person name="Kumagai A."/>
            <person name="Itakura S."/>
            <person name="Fukuzumi Y."/>
            <person name="Fujimori Y."/>
            <person name="Komiyama M."/>
            <person name="Tashiro H."/>
            <person name="Tanigami A."/>
            <person name="Fujiwara T."/>
            <person name="Ono T."/>
            <person name="Yamada K."/>
            <person name="Fujii Y."/>
            <person name="Ozaki K."/>
            <person name="Hirao M."/>
            <person name="Ohmori Y."/>
            <person name="Kawabata A."/>
            <person name="Hikiji T."/>
            <person name="Kobatake N."/>
            <person name="Inagaki H."/>
            <person name="Ikema Y."/>
            <person name="Okamoto S."/>
            <person name="Okitani R."/>
            <person name="Kawakami T."/>
            <person name="Noguchi S."/>
            <person name="Itoh T."/>
            <person name="Shigeta K."/>
            <person name="Senba T."/>
            <person name="Matsumura K."/>
            <person name="Nakajima Y."/>
            <person name="Mizuno T."/>
            <person name="Morinaga M."/>
            <person name="Sasaki M."/>
            <person name="Togashi T."/>
            <person name="Oyama M."/>
            <person name="Hata H."/>
            <person name="Watanabe M."/>
            <person name="Komatsu T."/>
            <person name="Mizushima-Sugano J."/>
            <person name="Satoh T."/>
            <person name="Shirai Y."/>
            <person name="Takahashi Y."/>
            <person name="Nakagawa K."/>
            <person name="Okumura K."/>
            <person name="Nagase T."/>
            <person name="Nomura N."/>
            <person name="Kikuchi H."/>
            <person name="Masuho Y."/>
            <person name="Yamashita R."/>
            <person name="Nakai K."/>
            <person name="Yada T."/>
            <person name="Nakamura Y."/>
            <person name="Ohara O."/>
            <person name="Isogai T."/>
            <person name="Sugano S."/>
        </authorList>
    </citation>
    <scope>NUCLEOTIDE SEQUENCE [LARGE SCALE MRNA] (ISOFORMS 1; 2 AND 3)</scope>
    <scope>VARIANTS PRO-142 AND THR-311</scope>
    <source>
        <tissue>Brain</tissue>
        <tissue>Thalamus</tissue>
    </source>
</reference>
<reference key="4">
    <citation type="journal article" date="2003" name="Nature">
        <title>The DNA sequence and analysis of human chromosome 6.</title>
        <authorList>
            <person name="Mungall A.J."/>
            <person name="Palmer S.A."/>
            <person name="Sims S.K."/>
            <person name="Edwards C.A."/>
            <person name="Ashurst J.L."/>
            <person name="Wilming L."/>
            <person name="Jones M.C."/>
            <person name="Horton R."/>
            <person name="Hunt S.E."/>
            <person name="Scott C.E."/>
            <person name="Gilbert J.G.R."/>
            <person name="Clamp M.E."/>
            <person name="Bethel G."/>
            <person name="Milne S."/>
            <person name="Ainscough R."/>
            <person name="Almeida J.P."/>
            <person name="Ambrose K.D."/>
            <person name="Andrews T.D."/>
            <person name="Ashwell R.I.S."/>
            <person name="Babbage A.K."/>
            <person name="Bagguley C.L."/>
            <person name="Bailey J."/>
            <person name="Banerjee R."/>
            <person name="Barker D.J."/>
            <person name="Barlow K.F."/>
            <person name="Bates K."/>
            <person name="Beare D.M."/>
            <person name="Beasley H."/>
            <person name="Beasley O."/>
            <person name="Bird C.P."/>
            <person name="Blakey S.E."/>
            <person name="Bray-Allen S."/>
            <person name="Brook J."/>
            <person name="Brown A.J."/>
            <person name="Brown J.Y."/>
            <person name="Burford D.C."/>
            <person name="Burrill W."/>
            <person name="Burton J."/>
            <person name="Carder C."/>
            <person name="Carter N.P."/>
            <person name="Chapman J.C."/>
            <person name="Clark S.Y."/>
            <person name="Clark G."/>
            <person name="Clee C.M."/>
            <person name="Clegg S."/>
            <person name="Cobley V."/>
            <person name="Collier R.E."/>
            <person name="Collins J.E."/>
            <person name="Colman L.K."/>
            <person name="Corby N.R."/>
            <person name="Coville G.J."/>
            <person name="Culley K.M."/>
            <person name="Dhami P."/>
            <person name="Davies J."/>
            <person name="Dunn M."/>
            <person name="Earthrowl M.E."/>
            <person name="Ellington A.E."/>
            <person name="Evans K.A."/>
            <person name="Faulkner L."/>
            <person name="Francis M.D."/>
            <person name="Frankish A."/>
            <person name="Frankland J."/>
            <person name="French L."/>
            <person name="Garner P."/>
            <person name="Garnett J."/>
            <person name="Ghori M.J."/>
            <person name="Gilby L.M."/>
            <person name="Gillson C.J."/>
            <person name="Glithero R.J."/>
            <person name="Grafham D.V."/>
            <person name="Grant M."/>
            <person name="Gribble S."/>
            <person name="Griffiths C."/>
            <person name="Griffiths M.N.D."/>
            <person name="Hall R."/>
            <person name="Halls K.S."/>
            <person name="Hammond S."/>
            <person name="Harley J.L."/>
            <person name="Hart E.A."/>
            <person name="Heath P.D."/>
            <person name="Heathcott R."/>
            <person name="Holmes S.J."/>
            <person name="Howden P.J."/>
            <person name="Howe K.L."/>
            <person name="Howell G.R."/>
            <person name="Huckle E."/>
            <person name="Humphray S.J."/>
            <person name="Humphries M.D."/>
            <person name="Hunt A.R."/>
            <person name="Johnson C.M."/>
            <person name="Joy A.A."/>
            <person name="Kay M."/>
            <person name="Keenan S.J."/>
            <person name="Kimberley A.M."/>
            <person name="King A."/>
            <person name="Laird G.K."/>
            <person name="Langford C."/>
            <person name="Lawlor S."/>
            <person name="Leongamornlert D.A."/>
            <person name="Leversha M."/>
            <person name="Lloyd C.R."/>
            <person name="Lloyd D.M."/>
            <person name="Loveland J.E."/>
            <person name="Lovell J."/>
            <person name="Martin S."/>
            <person name="Mashreghi-Mohammadi M."/>
            <person name="Maslen G.L."/>
            <person name="Matthews L."/>
            <person name="McCann O.T."/>
            <person name="McLaren S.J."/>
            <person name="McLay K."/>
            <person name="McMurray A."/>
            <person name="Moore M.J.F."/>
            <person name="Mullikin J.C."/>
            <person name="Niblett D."/>
            <person name="Nickerson T."/>
            <person name="Novik K.L."/>
            <person name="Oliver K."/>
            <person name="Overton-Larty E.K."/>
            <person name="Parker A."/>
            <person name="Patel R."/>
            <person name="Pearce A.V."/>
            <person name="Peck A.I."/>
            <person name="Phillimore B.J.C.T."/>
            <person name="Phillips S."/>
            <person name="Plumb R.W."/>
            <person name="Porter K.M."/>
            <person name="Ramsey Y."/>
            <person name="Ranby S.A."/>
            <person name="Rice C.M."/>
            <person name="Ross M.T."/>
            <person name="Searle S.M."/>
            <person name="Sehra H.K."/>
            <person name="Sheridan E."/>
            <person name="Skuce C.D."/>
            <person name="Smith S."/>
            <person name="Smith M."/>
            <person name="Spraggon L."/>
            <person name="Squares S.L."/>
            <person name="Steward C.A."/>
            <person name="Sycamore N."/>
            <person name="Tamlyn-Hall G."/>
            <person name="Tester J."/>
            <person name="Theaker A.J."/>
            <person name="Thomas D.W."/>
            <person name="Thorpe A."/>
            <person name="Tracey A."/>
            <person name="Tromans A."/>
            <person name="Tubby B."/>
            <person name="Wall M."/>
            <person name="Wallis J.M."/>
            <person name="West A.P."/>
            <person name="White S.S."/>
            <person name="Whitehead S.L."/>
            <person name="Whittaker H."/>
            <person name="Wild A."/>
            <person name="Willey D.J."/>
            <person name="Wilmer T.E."/>
            <person name="Wood J.M."/>
            <person name="Wray P.W."/>
            <person name="Wyatt J.C."/>
            <person name="Young L."/>
            <person name="Younger R.M."/>
            <person name="Bentley D.R."/>
            <person name="Coulson A."/>
            <person name="Durbin R.M."/>
            <person name="Hubbard T."/>
            <person name="Sulston J.E."/>
            <person name="Dunham I."/>
            <person name="Rogers J."/>
            <person name="Beck S."/>
        </authorList>
    </citation>
    <scope>NUCLEOTIDE SEQUENCE [LARGE SCALE GENOMIC DNA]</scope>
</reference>
<reference key="5">
    <citation type="journal article" date="2004" name="Genome Res.">
        <title>The status, quality, and expansion of the NIH full-length cDNA project: the Mammalian Gene Collection (MGC).</title>
        <authorList>
            <consortium name="The MGC Project Team"/>
        </authorList>
    </citation>
    <scope>NUCLEOTIDE SEQUENCE [LARGE SCALE MRNA] (ISOFORMS 1 AND 2)</scope>
    <scope>VARIANTS PRO-142 AND THR-311</scope>
    <source>
        <tissue>Brain</tissue>
    </source>
</reference>
<reference key="6">
    <citation type="journal article" date="2003" name="BMC Genomics">
        <title>A transcription map of the 6p22.3 reading disability locus identifying candidate genes.</title>
        <authorList>
            <person name="Londin E.R."/>
            <person name="Meng H."/>
            <person name="Gruen J.R."/>
        </authorList>
    </citation>
    <scope>TISSUE SPECIFICITY</scope>
</reference>
<reference key="7">
    <citation type="journal article" date="2006" name="Hum. Mol. Genet.">
        <title>The chromosome 6p22 haplotype associated with dyslexia reduces the expression of KIAA0319, a novel gene involved in neuronal migration.</title>
        <authorList>
            <person name="Paracchini S."/>
            <person name="Thomas A."/>
            <person name="Castro S."/>
            <person name="Lai C."/>
            <person name="Paramasivam M."/>
            <person name="Wang Y."/>
            <person name="Keating B.J."/>
            <person name="Taylor J.M."/>
            <person name="Hacking D.F."/>
            <person name="Scerri T."/>
            <person name="Francks C."/>
            <person name="Richardson A.J."/>
            <person name="Wade-Martins R."/>
            <person name="Stein J.F."/>
            <person name="Knight J.C."/>
            <person name="Copp A.J."/>
            <person name="Loturco J."/>
            <person name="Monaco A.P."/>
        </authorList>
    </citation>
    <scope>POSSIBLE INVOLVEMENT IN DYX2</scope>
    <scope>DEVELOPMENTAL STAGE</scope>
</reference>
<reference key="8">
    <citation type="journal article" date="2007" name="Mamm. Genome">
        <title>Alternative splicing in the dyslexia-associated gene KIAA0319.</title>
        <authorList>
            <person name="Velayos-Baeza A."/>
            <person name="Toma C."/>
            <person name="da Roza S."/>
            <person name="Paracchini S."/>
            <person name="Monaco A.P."/>
        </authorList>
    </citation>
    <scope>ALTERNATIVE SPLICING</scope>
    <scope>TISSUE SPECIFICITY</scope>
</reference>
<reference key="9">
    <citation type="journal article" date="2008" name="Hum. Mol. Genet.">
        <title>The dyslexia-associated gene KIAA0319 encodes highly N- and O-glycosylated plasma membrane and secreted isoforms.</title>
        <authorList>
            <person name="Velayos-Baeza A."/>
            <person name="Toma C."/>
            <person name="Paracchini S."/>
            <person name="Monaco A.P."/>
        </authorList>
    </citation>
    <scope>SUBCELLULAR LOCATION</scope>
    <scope>GLYCOSYLATION</scope>
    <scope>SUBUNIT</scope>
</reference>
<reference key="10">
    <citation type="journal article" date="2009" name="Am. J. Physiol.">
        <title>The dyslexia-associated protein KIAA0319 interacts with adaptor protein 2 and follows the classical clathrin-mediated endocytosis pathway.</title>
        <authorList>
            <person name="Levecque C."/>
            <person name="Velayos-Baeza A."/>
            <person name="Holloway Z.G."/>
            <person name="Monaco A.P."/>
        </authorList>
    </citation>
    <scope>SUBCELLULAR LOCATION</scope>
    <scope>MUTAGENESIS OF TYR-995</scope>
    <scope>ENDOCYTOSIS SIGNAL</scope>
    <scope>INTERACTION WITH AP2M1</scope>
</reference>
<reference key="11">
    <citation type="journal article" date="2010" name="Cereb. Cortex">
        <title>The effect of variation in expression of the candidate dyslexia susceptibility gene homolog Kiaa0319 on neuronal migration and dendritic morphology in the rat.</title>
        <authorList>
            <person name="Peschansky V.J."/>
            <person name="Burbridge T.J."/>
            <person name="Volz A.J."/>
            <person name="Fiondella C."/>
            <person name="Wissner-Gross Z."/>
            <person name="Galaburda A.M."/>
            <person name="Lo Turco J.J."/>
            <person name="Rosen G.D."/>
        </authorList>
    </citation>
    <scope>FUNCTION</scope>
</reference>
<reference key="12">
    <citation type="journal article" date="2010" name="J. Biol. Chem.">
        <title>The dyslexia-associated KIAA0319 protein undergoes proteolytic processing with {gamma}-secretase-independent intramembrane cleavage.</title>
        <authorList>
            <person name="Velayos-Baeza A."/>
            <person name="Levecque C."/>
            <person name="Kobayashi K."/>
            <person name="Holloway Z.G."/>
            <person name="Monaco A.P."/>
        </authorList>
    </citation>
    <scope>PROTEOLYTIC PROCESSING</scope>
</reference>
<reference key="13">
    <citation type="submission" date="2007-07" db="PDB data bank">
        <title>Solution structure of the PKD domain (329-428) from human KIAA0319.</title>
        <authorList>
            <consortium name="RIKEN structural genomics initiative (RSGI)"/>
        </authorList>
    </citation>
    <scope>STRUCTURE BY NMR OF 324-428</scope>
</reference>
<reference key="14">
    <citation type="journal article" date="2005" name="Am. J. Hum. Genet.">
        <title>Strong evidence that KIAA0319 on chromosome 6p is a susceptibility gene for developmental dyslexia.</title>
        <authorList>
            <person name="Cope N."/>
            <person name="Harold D."/>
            <person name="Hill G."/>
            <person name="Moskvina V."/>
            <person name="Stevenson J."/>
            <person name="Holmans P."/>
            <person name="Owen M.J."/>
            <person name="O'Donovan M.C."/>
            <person name="Williams J."/>
        </authorList>
    </citation>
    <scope>VARIANT THR-311</scope>
    <scope>INVOLVEMENT IN DYX2</scope>
</reference>
<dbReference type="EMBL" id="AB002317">
    <property type="protein sequence ID" value="BAA20777.2"/>
    <property type="status" value="ALT_INIT"/>
    <property type="molecule type" value="mRNA"/>
</dbReference>
<dbReference type="EMBL" id="AK295008">
    <property type="protein sequence ID" value="BAG58068.1"/>
    <property type="molecule type" value="mRNA"/>
</dbReference>
<dbReference type="EMBL" id="AK296310">
    <property type="protein sequence ID" value="BAG59008.1"/>
    <property type="molecule type" value="mRNA"/>
</dbReference>
<dbReference type="EMBL" id="AK296426">
    <property type="protein sequence ID" value="BAG59087.1"/>
    <property type="molecule type" value="mRNA"/>
</dbReference>
<dbReference type="EMBL" id="AL512385">
    <property type="status" value="NOT_ANNOTATED_CDS"/>
    <property type="molecule type" value="Genomic_DNA"/>
</dbReference>
<dbReference type="EMBL" id="AL031230">
    <property type="status" value="NOT_ANNOTATED_CDS"/>
    <property type="molecule type" value="Genomic_DNA"/>
</dbReference>
<dbReference type="EMBL" id="BC140821">
    <property type="protein sequence ID" value="AAI40822.1"/>
    <property type="molecule type" value="mRNA"/>
</dbReference>
<dbReference type="EMBL" id="BC144628">
    <property type="protein sequence ID" value="AAI44629.1"/>
    <property type="molecule type" value="mRNA"/>
</dbReference>
<dbReference type="EMBL" id="BC152460">
    <property type="protein sequence ID" value="AAI52461.1"/>
    <property type="molecule type" value="mRNA"/>
</dbReference>
<dbReference type="CCDS" id="CCDS34348.1">
    <molecule id="Q5VV43-1"/>
</dbReference>
<dbReference type="CCDS" id="CCDS54969.1">
    <molecule id="Q5VV43-3"/>
</dbReference>
<dbReference type="CCDS" id="CCDS54970.1">
    <molecule id="Q5VV43-2"/>
</dbReference>
<dbReference type="CCDS" id="CCDS54971.1">
    <molecule id="Q5VV43-4"/>
</dbReference>
<dbReference type="RefSeq" id="NP_001161846.1">
    <molecule id="Q5VV43-2"/>
    <property type="nucleotide sequence ID" value="NM_001168374.2"/>
</dbReference>
<dbReference type="RefSeq" id="NP_001161847.1">
    <molecule id="Q5VV43-1"/>
    <property type="nucleotide sequence ID" value="NM_001168375.2"/>
</dbReference>
<dbReference type="RefSeq" id="NP_001161848.1">
    <molecule id="Q5VV43-3"/>
    <property type="nucleotide sequence ID" value="NM_001168376.2"/>
</dbReference>
<dbReference type="RefSeq" id="NP_001161849.1">
    <molecule id="Q5VV43-4"/>
    <property type="nucleotide sequence ID" value="NM_001168377.2"/>
</dbReference>
<dbReference type="RefSeq" id="NP_001337332.1">
    <molecule id="Q5VV43-1"/>
    <property type="nucleotide sequence ID" value="NM_001350403.2"/>
</dbReference>
<dbReference type="RefSeq" id="NP_001337335.1">
    <molecule id="Q5VV43-3"/>
    <property type="nucleotide sequence ID" value="NM_001350406.2"/>
</dbReference>
<dbReference type="RefSeq" id="NP_055624.2">
    <molecule id="Q5VV43-1"/>
    <property type="nucleotide sequence ID" value="NM_014809.4"/>
</dbReference>
<dbReference type="RefSeq" id="XP_011513327.1">
    <property type="nucleotide sequence ID" value="XM_011515025.2"/>
</dbReference>
<dbReference type="RefSeq" id="XP_011513328.1">
    <property type="nucleotide sequence ID" value="XM_011515026.2"/>
</dbReference>
<dbReference type="RefSeq" id="XP_016867030.1">
    <molecule id="Q5VV43-2"/>
    <property type="nucleotide sequence ID" value="XM_017011541.2"/>
</dbReference>
<dbReference type="RefSeq" id="XP_016867034.1">
    <property type="nucleotide sequence ID" value="XM_017011545.1"/>
</dbReference>
<dbReference type="PDB" id="2E7M">
    <property type="method" value="NMR"/>
    <property type="chains" value="A=329-428"/>
</dbReference>
<dbReference type="PDBsum" id="2E7M"/>
<dbReference type="SMR" id="Q5VV43"/>
<dbReference type="BioGRID" id="115190">
    <property type="interactions" value="4"/>
</dbReference>
<dbReference type="FunCoup" id="Q5VV43">
    <property type="interactions" value="517"/>
</dbReference>
<dbReference type="IntAct" id="Q5VV43">
    <property type="interactions" value="5"/>
</dbReference>
<dbReference type="STRING" id="9606.ENSP00000367459"/>
<dbReference type="GlyCosmos" id="Q5VV43">
    <property type="glycosylation" value="10 sites, No reported glycans"/>
</dbReference>
<dbReference type="GlyGen" id="Q5VV43">
    <property type="glycosylation" value="13 sites, 2 N-linked glycans (2 sites)"/>
</dbReference>
<dbReference type="iPTMnet" id="Q5VV43"/>
<dbReference type="PhosphoSitePlus" id="Q5VV43"/>
<dbReference type="BioMuta" id="KIAA0319"/>
<dbReference type="DMDM" id="74747200"/>
<dbReference type="jPOST" id="Q5VV43"/>
<dbReference type="MassIVE" id="Q5VV43"/>
<dbReference type="PaxDb" id="9606-ENSP00000367459"/>
<dbReference type="PeptideAtlas" id="Q5VV43"/>
<dbReference type="ProteomicsDB" id="25518"/>
<dbReference type="ProteomicsDB" id="65441">
    <molecule id="Q5VV43-1"/>
</dbReference>
<dbReference type="ProteomicsDB" id="65442">
    <molecule id="Q5VV43-2"/>
</dbReference>
<dbReference type="ProteomicsDB" id="65443">
    <molecule id="Q5VV43-3"/>
</dbReference>
<dbReference type="Antibodypedia" id="2465">
    <property type="antibodies" value="120 antibodies from 26 providers"/>
</dbReference>
<dbReference type="DNASU" id="9856"/>
<dbReference type="Ensembl" id="ENST00000378214.8">
    <molecule id="Q5VV43-1"/>
    <property type="protein sequence ID" value="ENSP00000367459.3"/>
    <property type="gene ID" value="ENSG00000137261.15"/>
</dbReference>
<dbReference type="Ensembl" id="ENST00000430948.6">
    <molecule id="Q5VV43-3"/>
    <property type="protein sequence ID" value="ENSP00000401086.2"/>
    <property type="gene ID" value="ENSG00000137261.15"/>
</dbReference>
<dbReference type="Ensembl" id="ENST00000535378.5">
    <molecule id="Q5VV43-2"/>
    <property type="protein sequence ID" value="ENSP00000442403.1"/>
    <property type="gene ID" value="ENSG00000137261.15"/>
</dbReference>
<dbReference type="Ensembl" id="ENST00000537886.5">
    <molecule id="Q5VV43-4"/>
    <property type="protein sequence ID" value="ENSP00000439700.1"/>
    <property type="gene ID" value="ENSG00000137261.15"/>
</dbReference>
<dbReference type="GeneID" id="9856"/>
<dbReference type="KEGG" id="hsa:9856"/>
<dbReference type="MANE-Select" id="ENST00000378214.8">
    <property type="protein sequence ID" value="ENSP00000367459.3"/>
    <property type="RefSeq nucleotide sequence ID" value="NM_014809.4"/>
    <property type="RefSeq protein sequence ID" value="NP_055624.2"/>
</dbReference>
<dbReference type="UCSC" id="uc003neh.2">
    <molecule id="Q5VV43-1"/>
    <property type="organism name" value="human"/>
</dbReference>
<dbReference type="AGR" id="HGNC:21580"/>
<dbReference type="CTD" id="9856"/>
<dbReference type="DisGeNET" id="9856"/>
<dbReference type="GeneCards" id="KIAA0319"/>
<dbReference type="HGNC" id="HGNC:21580">
    <property type="gene designation" value="KIAA0319"/>
</dbReference>
<dbReference type="HPA" id="ENSG00000137261">
    <property type="expression patterns" value="Tissue enhanced (brain, pituitary gland)"/>
</dbReference>
<dbReference type="MalaCards" id="KIAA0319"/>
<dbReference type="MIM" id="600202">
    <property type="type" value="phenotype"/>
</dbReference>
<dbReference type="MIM" id="609269">
    <property type="type" value="gene"/>
</dbReference>
<dbReference type="neXtProt" id="NX_Q5VV43"/>
<dbReference type="OpenTargets" id="ENSG00000137261"/>
<dbReference type="PharmGKB" id="PA134936721"/>
<dbReference type="VEuPathDB" id="HostDB:ENSG00000137261"/>
<dbReference type="eggNOG" id="ENOG502QR8M">
    <property type="taxonomic scope" value="Eukaryota"/>
</dbReference>
<dbReference type="GeneTree" id="ENSGT00940000161462"/>
<dbReference type="HOGENOM" id="CLU_009448_0_1_1"/>
<dbReference type="InParanoid" id="Q5VV43"/>
<dbReference type="OMA" id="AFWMENL"/>
<dbReference type="OrthoDB" id="536372at2759"/>
<dbReference type="PAN-GO" id="Q5VV43">
    <property type="GO annotations" value="3 GO annotations based on evolutionary models"/>
</dbReference>
<dbReference type="PhylomeDB" id="Q5VV43"/>
<dbReference type="TreeFam" id="TF323356"/>
<dbReference type="PathwayCommons" id="Q5VV43"/>
<dbReference type="Reactome" id="R-HSA-8856825">
    <property type="pathway name" value="Cargo recognition for clathrin-mediated endocytosis"/>
</dbReference>
<dbReference type="Reactome" id="R-HSA-8856828">
    <property type="pathway name" value="Clathrin-mediated endocytosis"/>
</dbReference>
<dbReference type="SignaLink" id="Q5VV43"/>
<dbReference type="BioGRID-ORCS" id="9856">
    <property type="hits" value="12 hits in 1140 CRISPR screens"/>
</dbReference>
<dbReference type="ChiTaRS" id="KIAA0319">
    <property type="organism name" value="human"/>
</dbReference>
<dbReference type="EvolutionaryTrace" id="Q5VV43"/>
<dbReference type="GeneWiki" id="KIAA0319"/>
<dbReference type="GenomeRNAi" id="9856"/>
<dbReference type="Pharos" id="Q5VV43">
    <property type="development level" value="Tbio"/>
</dbReference>
<dbReference type="PRO" id="PR:Q5VV43"/>
<dbReference type="Proteomes" id="UP000005640">
    <property type="component" value="Chromosome 6"/>
</dbReference>
<dbReference type="RNAct" id="Q5VV43">
    <property type="molecule type" value="protein"/>
</dbReference>
<dbReference type="Bgee" id="ENSG00000137261">
    <property type="expression patterns" value="Expressed in cortical plate and 114 other cell types or tissues"/>
</dbReference>
<dbReference type="ExpressionAtlas" id="Q5VV43">
    <property type="expression patterns" value="baseline and differential"/>
</dbReference>
<dbReference type="GO" id="GO:0030669">
    <property type="term" value="C:clathrin-coated endocytic vesicle membrane"/>
    <property type="evidence" value="ECO:0000304"/>
    <property type="project" value="Reactome"/>
</dbReference>
<dbReference type="GO" id="GO:0031410">
    <property type="term" value="C:cytoplasmic vesicle"/>
    <property type="evidence" value="ECO:0000318"/>
    <property type="project" value="GO_Central"/>
</dbReference>
<dbReference type="GO" id="GO:0005769">
    <property type="term" value="C:early endosome"/>
    <property type="evidence" value="ECO:0000314"/>
    <property type="project" value="UniProtKB"/>
</dbReference>
<dbReference type="GO" id="GO:0031901">
    <property type="term" value="C:early endosome membrane"/>
    <property type="evidence" value="ECO:0007669"/>
    <property type="project" value="UniProtKB-SubCell"/>
</dbReference>
<dbReference type="GO" id="GO:0043231">
    <property type="term" value="C:intracellular membrane-bounded organelle"/>
    <property type="evidence" value="ECO:0000314"/>
    <property type="project" value="HPA"/>
</dbReference>
<dbReference type="GO" id="GO:0005886">
    <property type="term" value="C:plasma membrane"/>
    <property type="evidence" value="ECO:0000314"/>
    <property type="project" value="UniProtKB"/>
</dbReference>
<dbReference type="GO" id="GO:0021954">
    <property type="term" value="P:central nervous system neuron development"/>
    <property type="evidence" value="ECO:0007669"/>
    <property type="project" value="Ensembl"/>
</dbReference>
<dbReference type="GO" id="GO:0033555">
    <property type="term" value="P:multicellular organismal response to stress"/>
    <property type="evidence" value="ECO:0007669"/>
    <property type="project" value="Ensembl"/>
</dbReference>
<dbReference type="GO" id="GO:0030517">
    <property type="term" value="P:negative regulation of axon extension"/>
    <property type="evidence" value="ECO:0000315"/>
    <property type="project" value="MGI"/>
</dbReference>
<dbReference type="GO" id="GO:0048692">
    <property type="term" value="P:negative regulation of axon extension involved in regeneration"/>
    <property type="evidence" value="ECO:0000315"/>
    <property type="project" value="MGI"/>
</dbReference>
<dbReference type="GO" id="GO:2000171">
    <property type="term" value="P:negative regulation of dendrite development"/>
    <property type="evidence" value="ECO:0000316"/>
    <property type="project" value="UniProtKB"/>
</dbReference>
<dbReference type="GO" id="GO:0001764">
    <property type="term" value="P:neuron migration"/>
    <property type="evidence" value="ECO:0000316"/>
    <property type="project" value="UniProtKB"/>
</dbReference>
<dbReference type="GO" id="GO:0060391">
    <property type="term" value="P:positive regulation of SMAD protein signal transduction"/>
    <property type="evidence" value="ECO:0000315"/>
    <property type="project" value="MGI"/>
</dbReference>
<dbReference type="GO" id="GO:0007605">
    <property type="term" value="P:sensory perception of sound"/>
    <property type="evidence" value="ECO:0007669"/>
    <property type="project" value="Ensembl"/>
</dbReference>
<dbReference type="GO" id="GO:0021794">
    <property type="term" value="P:thalamus development"/>
    <property type="evidence" value="ECO:0007669"/>
    <property type="project" value="Ensembl"/>
</dbReference>
<dbReference type="GO" id="GO:0042297">
    <property type="term" value="P:vocal learning"/>
    <property type="evidence" value="ECO:0007669"/>
    <property type="project" value="Ensembl"/>
</dbReference>
<dbReference type="CDD" id="cd00146">
    <property type="entry name" value="PKD"/>
    <property type="match status" value="4"/>
</dbReference>
<dbReference type="FunFam" id="2.60.40.10:FF:000061">
    <property type="entry name" value="Dyslexia-associated protein KIAA0319 homolog"/>
    <property type="match status" value="2"/>
</dbReference>
<dbReference type="FunFam" id="2.60.40.10:FF:000258">
    <property type="entry name" value="Dyslexia-associated protein KIAA0319 homolog"/>
    <property type="match status" value="1"/>
</dbReference>
<dbReference type="FunFam" id="2.60.40.10:FF:000319">
    <property type="entry name" value="Dyslexia-associated protein KIAA0319 homolog"/>
    <property type="match status" value="1"/>
</dbReference>
<dbReference type="FunFam" id="2.60.40.10:FF:000257">
    <property type="entry name" value="Dyslexia-associated protein KIAA0319-like"/>
    <property type="match status" value="1"/>
</dbReference>
<dbReference type="Gene3D" id="2.60.40.10">
    <property type="entry name" value="Immunoglobulins"/>
    <property type="match status" value="5"/>
</dbReference>
<dbReference type="InterPro" id="IPR003961">
    <property type="entry name" value="FN3_dom"/>
</dbReference>
<dbReference type="InterPro" id="IPR013783">
    <property type="entry name" value="Ig-like_fold"/>
</dbReference>
<dbReference type="InterPro" id="IPR029865">
    <property type="entry name" value="KIAA0319-like"/>
</dbReference>
<dbReference type="InterPro" id="IPR056502">
    <property type="entry name" value="KIAA0319-like_C"/>
</dbReference>
<dbReference type="InterPro" id="IPR013980">
    <property type="entry name" value="MANSC_dom"/>
</dbReference>
<dbReference type="InterPro" id="IPR011106">
    <property type="entry name" value="MANSC_N"/>
</dbReference>
<dbReference type="InterPro" id="IPR022409">
    <property type="entry name" value="PKD/Chitinase_dom"/>
</dbReference>
<dbReference type="InterPro" id="IPR000601">
    <property type="entry name" value="PKD_dom"/>
</dbReference>
<dbReference type="InterPro" id="IPR035986">
    <property type="entry name" value="PKD_dom_sf"/>
</dbReference>
<dbReference type="PANTHER" id="PTHR46182:SF1">
    <property type="entry name" value="DYSLEXIA-ASSOCIATED PROTEIN KIAA0319"/>
    <property type="match status" value="1"/>
</dbReference>
<dbReference type="PANTHER" id="PTHR46182">
    <property type="entry name" value="FI19480P1"/>
    <property type="match status" value="1"/>
</dbReference>
<dbReference type="Pfam" id="PF22352">
    <property type="entry name" value="K319L-like_PKD"/>
    <property type="match status" value="5"/>
</dbReference>
<dbReference type="Pfam" id="PF23620">
    <property type="entry name" value="KIAA0319"/>
    <property type="match status" value="1"/>
</dbReference>
<dbReference type="Pfam" id="PF23597">
    <property type="entry name" value="KIAA0319_N"/>
    <property type="match status" value="1"/>
</dbReference>
<dbReference type="SMART" id="SM00060">
    <property type="entry name" value="FN3"/>
    <property type="match status" value="4"/>
</dbReference>
<dbReference type="SMART" id="SM00765">
    <property type="entry name" value="MANEC"/>
    <property type="match status" value="1"/>
</dbReference>
<dbReference type="SMART" id="SM00089">
    <property type="entry name" value="PKD"/>
    <property type="match status" value="5"/>
</dbReference>
<dbReference type="SUPFAM" id="SSF49299">
    <property type="entry name" value="PKD domain"/>
    <property type="match status" value="4"/>
</dbReference>
<dbReference type="PROSITE" id="PS50986">
    <property type="entry name" value="MANSC"/>
    <property type="match status" value="1"/>
</dbReference>
<dbReference type="PROSITE" id="PS50093">
    <property type="entry name" value="PKD"/>
    <property type="match status" value="1"/>
</dbReference>
<gene>
    <name type="primary">KIAA0319</name>
</gene>
<feature type="signal peptide" evidence="1">
    <location>
        <begin position="1"/>
        <end position="20"/>
    </location>
</feature>
<feature type="chain" id="PRO_0000042946" description="Dyslexia-associated protein KIAA0319">
    <location>
        <begin position="21"/>
        <end position="1072"/>
    </location>
</feature>
<feature type="topological domain" description="Extracellular" evidence="1">
    <location>
        <begin position="21"/>
        <end position="955"/>
    </location>
</feature>
<feature type="transmembrane region" description="Helical" evidence="1">
    <location>
        <begin position="956"/>
        <end position="976"/>
    </location>
</feature>
<feature type="topological domain" description="Cytoplasmic" evidence="1">
    <location>
        <begin position="977"/>
        <end position="1072"/>
    </location>
</feature>
<feature type="domain" description="MANSC" evidence="3">
    <location>
        <begin position="21"/>
        <end position="99"/>
    </location>
</feature>
<feature type="domain" description="PKD 1" evidence="2">
    <location>
        <begin position="341"/>
        <end position="427"/>
    </location>
</feature>
<feature type="domain" description="PKD 2" evidence="2">
    <location>
        <begin position="435"/>
        <end position="524"/>
    </location>
</feature>
<feature type="domain" description="PKD 3" evidence="2">
    <location>
        <begin position="530"/>
        <end position="620"/>
    </location>
</feature>
<feature type="domain" description="PKD 4" evidence="2">
    <location>
        <begin position="621"/>
        <end position="714"/>
    </location>
</feature>
<feature type="domain" description="PKD 5" evidence="2">
    <location>
        <begin position="720"/>
        <end position="811"/>
    </location>
</feature>
<feature type="region of interest" description="Disordered" evidence="4">
    <location>
        <begin position="168"/>
        <end position="277"/>
    </location>
</feature>
<feature type="region of interest" description="Disordered" evidence="4">
    <location>
        <begin position="295"/>
        <end position="327"/>
    </location>
</feature>
<feature type="region of interest" description="Disordered" evidence="4">
    <location>
        <begin position="1045"/>
        <end position="1072"/>
    </location>
</feature>
<feature type="short sequence motif" description="Endocytosis signal">
    <location>
        <begin position="995"/>
        <end position="998"/>
    </location>
</feature>
<feature type="compositionally biased region" description="Polar residues" evidence="4">
    <location>
        <begin position="254"/>
        <end position="265"/>
    </location>
</feature>
<feature type="compositionally biased region" description="Low complexity" evidence="4">
    <location>
        <begin position="311"/>
        <end position="320"/>
    </location>
</feature>
<feature type="compositionally biased region" description="Polar residues" evidence="4">
    <location>
        <begin position="1053"/>
        <end position="1072"/>
    </location>
</feature>
<feature type="glycosylation site" description="N-linked (GlcNAc...) asparagine" evidence="1">
    <location>
        <position position="196"/>
    </location>
</feature>
<feature type="glycosylation site" description="N-linked (GlcNAc...) asparagine" evidence="1">
    <location>
        <position position="219"/>
    </location>
</feature>
<feature type="glycosylation site" description="N-linked (GlcNAc...) asparagine" evidence="1">
    <location>
        <position position="262"/>
    </location>
</feature>
<feature type="glycosylation site" description="N-linked (GlcNAc...) asparagine" evidence="1">
    <location>
        <position position="394"/>
    </location>
</feature>
<feature type="glycosylation site" description="N-linked (GlcNAc...) asparagine" evidence="1">
    <location>
        <position position="421"/>
    </location>
</feature>
<feature type="glycosylation site" description="N-linked (GlcNAc...) asparagine" evidence="1">
    <location>
        <position position="498"/>
    </location>
</feature>
<feature type="glycosylation site" description="N-linked (GlcNAc...) asparagine" evidence="1">
    <location>
        <position position="513"/>
    </location>
</feature>
<feature type="glycosylation site" description="N-linked (GlcNAc...) asparagine" evidence="1">
    <location>
        <position position="536"/>
    </location>
</feature>
<feature type="glycosylation site" description="N-linked (GlcNAc...) asparagine" evidence="1">
    <location>
        <position position="551"/>
    </location>
</feature>
<feature type="glycosylation site" description="N-linked (GlcNAc...) asparagine" evidence="1">
    <location>
        <position position="733"/>
    </location>
</feature>
<feature type="splice variant" id="VSP_036234" description="In isoform 3." evidence="16">
    <location>
        <begin position="1"/>
        <end position="45"/>
    </location>
</feature>
<feature type="splice variant" id="VSP_036235" description="In isoform 2." evidence="16 17">
    <original>MAPPTGVLSSLLLLVTIAG</original>
    <variation>MTRLGWPSPC</variation>
    <location>
        <begin position="1"/>
        <end position="19"/>
    </location>
</feature>
<feature type="splice variant" id="VSP_044971" description="In isoform 4." evidence="18">
    <location>
        <begin position="953"/>
        <end position="1013"/>
    </location>
</feature>
<feature type="sequence variant" id="VAR_023837" description="In dbSNP:rs4576240." evidence="6 7 15">
    <original>T</original>
    <variation>P</variation>
    <location>
        <position position="142"/>
    </location>
</feature>
<feature type="sequence variant" id="VAR_023838" description="Risk factor for DYX2; dbSNP:rs4504469." evidence="6 7 8">
    <original>A</original>
    <variation>T</variation>
    <location>
        <position position="311"/>
    </location>
</feature>
<feature type="sequence variant" id="VAR_049505" description="In dbSNP:rs2744559.">
    <original>G</original>
    <variation>S</variation>
    <location>
        <position position="567"/>
    </location>
</feature>
<feature type="sequence variant" id="VAR_049506" description="In dbSNP:rs2744550.">
    <original>S</original>
    <variation>G</variation>
    <location>
        <position position="773"/>
    </location>
</feature>
<feature type="sequence variant" id="VAR_049507" description="In dbSNP:rs2817191.">
    <original>V</original>
    <variation>A</variation>
    <location>
        <position position="774"/>
    </location>
</feature>
<feature type="sequence variant" id="VAR_034032" description="In dbSNP:rs10946705.">
    <original>G</original>
    <variation>A</variation>
    <location>
        <position position="919"/>
    </location>
</feature>
<feature type="sequence variant" id="VAR_049508" description="In dbSNP:rs807534.">
    <original>Y</original>
    <variation>C</variation>
    <location>
        <position position="1013"/>
    </location>
</feature>
<feature type="mutagenesis site" description="Loss of interaction with AP2M1 and impaired endocytosis." evidence="12">
    <original>Y</original>
    <variation>A</variation>
    <location>
        <position position="995"/>
    </location>
</feature>
<feature type="sequence conflict" description="In Ref. 3; BAG58068." evidence="18" ref="3">
    <original>R</original>
    <variation>S</variation>
    <location>
        <position position="97"/>
    </location>
</feature>
<feature type="sequence conflict" description="In Ref. 1; BAA20777 and 5; AAI52461." evidence="18" ref="1 5">
    <original>S</original>
    <variation>A</variation>
    <location>
        <position position="157"/>
    </location>
</feature>
<feature type="sequence conflict" description="In Ref. 3; BAG59087." evidence="18" ref="3">
    <original>L</original>
    <variation>H</variation>
    <location>
        <position position="256"/>
    </location>
</feature>
<feature type="sequence conflict" description="In Ref. 5; AAI44629." evidence="18" ref="5">
    <original>L</original>
    <variation>I</variation>
    <location>
        <position position="926"/>
    </location>
</feature>
<feature type="strand" evidence="19">
    <location>
        <begin position="336"/>
        <end position="338"/>
    </location>
</feature>
<feature type="strand" evidence="19">
    <location>
        <begin position="343"/>
        <end position="346"/>
    </location>
</feature>
<feature type="strand" evidence="19">
    <location>
        <begin position="352"/>
        <end position="355"/>
    </location>
</feature>
<feature type="strand" evidence="19">
    <location>
        <begin position="357"/>
        <end position="360"/>
    </location>
</feature>
<feature type="strand" evidence="19">
    <location>
        <begin position="374"/>
        <end position="376"/>
    </location>
</feature>
<feature type="strand" evidence="19">
    <location>
        <begin position="389"/>
        <end position="395"/>
    </location>
</feature>
<feature type="strand" evidence="19">
    <location>
        <begin position="400"/>
        <end position="405"/>
    </location>
</feature>
<feature type="strand" evidence="19">
    <location>
        <begin position="408"/>
        <end position="411"/>
    </location>
</feature>
<feature type="strand" evidence="19">
    <location>
        <begin position="414"/>
        <end position="417"/>
    </location>
</feature>
<feature type="strand" evidence="19">
    <location>
        <begin position="420"/>
        <end position="425"/>
    </location>
</feature>